<geneLocation type="plasmid">
    <name>TOL pWW0</name>
</geneLocation>
<dbReference type="EC" id="4.1.3.39" evidence="1"/>
<dbReference type="EMBL" id="M94186">
    <property type="protein sequence ID" value="AAA25692.1"/>
    <property type="molecule type" value="Genomic_DNA"/>
</dbReference>
<dbReference type="PIR" id="S35223">
    <property type="entry name" value="S35223"/>
</dbReference>
<dbReference type="RefSeq" id="NP_542861.1">
    <property type="nucleotide sequence ID" value="NC_003350.1"/>
</dbReference>
<dbReference type="SMR" id="P51019"/>
<dbReference type="BioCyc" id="MetaCyc:MONOMER-3404"/>
<dbReference type="UniPathway" id="UPA00273"/>
<dbReference type="GO" id="GO:0003852">
    <property type="term" value="F:2-isopropylmalate synthase activity"/>
    <property type="evidence" value="ECO:0007669"/>
    <property type="project" value="TreeGrafter"/>
</dbReference>
<dbReference type="GO" id="GO:0008701">
    <property type="term" value="F:4-hydroxy-2-oxovalerate aldolase activity"/>
    <property type="evidence" value="ECO:0007669"/>
    <property type="project" value="UniProtKB-UniRule"/>
</dbReference>
<dbReference type="GO" id="GO:0030145">
    <property type="term" value="F:manganese ion binding"/>
    <property type="evidence" value="ECO:0007669"/>
    <property type="project" value="UniProtKB-UniRule"/>
</dbReference>
<dbReference type="GO" id="GO:0009098">
    <property type="term" value="P:L-leucine biosynthetic process"/>
    <property type="evidence" value="ECO:0007669"/>
    <property type="project" value="TreeGrafter"/>
</dbReference>
<dbReference type="GO" id="GO:0042203">
    <property type="term" value="P:toluene catabolic process"/>
    <property type="evidence" value="ECO:0007669"/>
    <property type="project" value="UniProtKB-UniPathway"/>
</dbReference>
<dbReference type="CDD" id="cd07943">
    <property type="entry name" value="DRE_TIM_HOA"/>
    <property type="match status" value="1"/>
</dbReference>
<dbReference type="FunFam" id="1.10.8.60:FF:000042">
    <property type="entry name" value="4-hydroxy-2-oxovalerate aldolase"/>
    <property type="match status" value="1"/>
</dbReference>
<dbReference type="FunFam" id="3.20.20.70:FF:000072">
    <property type="entry name" value="4-hydroxy-2-oxovalerate aldolase"/>
    <property type="match status" value="1"/>
</dbReference>
<dbReference type="Gene3D" id="1.10.8.60">
    <property type="match status" value="1"/>
</dbReference>
<dbReference type="Gene3D" id="3.20.20.70">
    <property type="entry name" value="Aldolase class I"/>
    <property type="match status" value="1"/>
</dbReference>
<dbReference type="HAMAP" id="MF_01656">
    <property type="entry name" value="HOA"/>
    <property type="match status" value="1"/>
</dbReference>
<dbReference type="InterPro" id="IPR050073">
    <property type="entry name" value="2-IPM_HCS-like"/>
</dbReference>
<dbReference type="InterPro" id="IPR017629">
    <property type="entry name" value="4OH_2_O-val_aldolase"/>
</dbReference>
<dbReference type="InterPro" id="IPR013785">
    <property type="entry name" value="Aldolase_TIM"/>
</dbReference>
<dbReference type="InterPro" id="IPR012425">
    <property type="entry name" value="DmpG_comm"/>
</dbReference>
<dbReference type="InterPro" id="IPR035685">
    <property type="entry name" value="DRE_TIM_HOA"/>
</dbReference>
<dbReference type="InterPro" id="IPR000891">
    <property type="entry name" value="PYR_CT"/>
</dbReference>
<dbReference type="NCBIfam" id="TIGR03217">
    <property type="entry name" value="4OH_2_O_val_ald"/>
    <property type="match status" value="1"/>
</dbReference>
<dbReference type="NCBIfam" id="NF006049">
    <property type="entry name" value="PRK08195.1"/>
    <property type="match status" value="1"/>
</dbReference>
<dbReference type="PANTHER" id="PTHR10277:SF9">
    <property type="entry name" value="2-ISOPROPYLMALATE SYNTHASE 1, CHLOROPLASTIC-RELATED"/>
    <property type="match status" value="1"/>
</dbReference>
<dbReference type="PANTHER" id="PTHR10277">
    <property type="entry name" value="HOMOCITRATE SYNTHASE-RELATED"/>
    <property type="match status" value="1"/>
</dbReference>
<dbReference type="Pfam" id="PF07836">
    <property type="entry name" value="DmpG_comm"/>
    <property type="match status" value="1"/>
</dbReference>
<dbReference type="Pfam" id="PF00682">
    <property type="entry name" value="HMGL-like"/>
    <property type="match status" value="1"/>
</dbReference>
<dbReference type="SUPFAM" id="SSF51569">
    <property type="entry name" value="Aldolase"/>
    <property type="match status" value="1"/>
</dbReference>
<dbReference type="SUPFAM" id="SSF89000">
    <property type="entry name" value="post-HMGL domain-like"/>
    <property type="match status" value="1"/>
</dbReference>
<dbReference type="PROSITE" id="PS50991">
    <property type="entry name" value="PYR_CT"/>
    <property type="match status" value="1"/>
</dbReference>
<gene>
    <name type="primary">xylK</name>
</gene>
<accession>P51019</accession>
<name>HOA2_PSEPU</name>
<comment type="catalytic activity">
    <reaction evidence="1">
        <text>(S)-4-hydroxy-2-oxopentanoate = acetaldehyde + pyruvate</text>
        <dbReference type="Rhea" id="RHEA:22624"/>
        <dbReference type="ChEBI" id="CHEBI:15343"/>
        <dbReference type="ChEBI" id="CHEBI:15361"/>
        <dbReference type="ChEBI" id="CHEBI:73143"/>
        <dbReference type="EC" id="4.1.3.39"/>
    </reaction>
</comment>
<comment type="pathway">
    <text>Xenobiotic degradation; toluene degradation.</text>
</comment>
<comment type="similarity">
    <text evidence="1 2">Belongs to the 4-hydroxy-2-oxovalerate aldolase family.</text>
</comment>
<proteinExistence type="inferred from homology"/>
<reference key="1">
    <citation type="journal article" date="1993" name="Mol. Gen. Genet.">
        <title>Comparison of the nucleotide sequences of the meta-cleavage pathway genes of TOL plasmid pWW0 from Pseudomonas putida with other meta-cleavage genes suggests that both single and multiple nucleotide substitutions contribute to enzyme evolution.</title>
        <authorList>
            <person name="Harayama S."/>
            <person name="Rekik M."/>
        </authorList>
    </citation>
    <scope>NUCLEOTIDE SEQUENCE [GENOMIC DNA]</scope>
</reference>
<keyword id="KW-0058">Aromatic hydrocarbons catabolism</keyword>
<keyword id="KW-0456">Lyase</keyword>
<keyword id="KW-0464">Manganese</keyword>
<keyword id="KW-0479">Metal-binding</keyword>
<keyword id="KW-0614">Plasmid</keyword>
<organism>
    <name type="scientific">Pseudomonas putida</name>
    <name type="common">Arthrobacter siderocapsulatus</name>
    <dbReference type="NCBI Taxonomy" id="303"/>
    <lineage>
        <taxon>Bacteria</taxon>
        <taxon>Pseudomonadati</taxon>
        <taxon>Pseudomonadota</taxon>
        <taxon>Gammaproteobacteria</taxon>
        <taxon>Pseudomonadales</taxon>
        <taxon>Pseudomonadaceae</taxon>
        <taxon>Pseudomonas</taxon>
    </lineage>
</organism>
<evidence type="ECO:0000255" key="1">
    <source>
        <dbReference type="HAMAP-Rule" id="MF_01656"/>
    </source>
</evidence>
<evidence type="ECO:0000305" key="2"/>
<feature type="chain" id="PRO_0000066056" description="4-hydroxy-2-oxovalerate aldolase">
    <location>
        <begin position="1"/>
        <end position="345"/>
    </location>
</feature>
<feature type="domain" description="Pyruvate carboxyltransferase" evidence="1">
    <location>
        <begin position="9"/>
        <end position="261"/>
    </location>
</feature>
<feature type="active site" description="Proton acceptor" evidence="1">
    <location>
        <position position="21"/>
    </location>
</feature>
<feature type="binding site" evidence="1">
    <location>
        <begin position="17"/>
        <end position="18"/>
    </location>
    <ligand>
        <name>substrate</name>
    </ligand>
</feature>
<feature type="binding site" evidence="1">
    <location>
        <position position="18"/>
    </location>
    <ligand>
        <name>Mn(2+)</name>
        <dbReference type="ChEBI" id="CHEBI:29035"/>
    </ligand>
</feature>
<feature type="binding site" evidence="1">
    <location>
        <position position="171"/>
    </location>
    <ligand>
        <name>substrate</name>
    </ligand>
</feature>
<feature type="binding site" evidence="1">
    <location>
        <position position="200"/>
    </location>
    <ligand>
        <name>Mn(2+)</name>
        <dbReference type="ChEBI" id="CHEBI:29035"/>
    </ligand>
</feature>
<feature type="binding site" evidence="1">
    <location>
        <position position="200"/>
    </location>
    <ligand>
        <name>substrate</name>
    </ligand>
</feature>
<feature type="binding site" evidence="1">
    <location>
        <position position="202"/>
    </location>
    <ligand>
        <name>Mn(2+)</name>
        <dbReference type="ChEBI" id="CHEBI:29035"/>
    </ligand>
</feature>
<feature type="binding site" evidence="1">
    <location>
        <position position="291"/>
    </location>
    <ligand>
        <name>substrate</name>
    </ligand>
</feature>
<feature type="site" description="Transition state stabilizer" evidence="1">
    <location>
        <position position="17"/>
    </location>
</feature>
<sequence length="345" mass="37444">MTFNPGKKLYISDVTLRDGSHAIRHQYSIQNVQDIARALDKARVDSIEVTHGDGLQGSSFNYGFGAHSDLEWIEAAADVIQHARVTVLLVPGIGTVHDLKAAYDAGARSVRVATHCTEADVSRQHIEYARELGMDTVGFLMMSHMIPAEQLAAQGKLMETYGAQCIYMADSGGAMNMNDIRDRMRAFKAVLNPQTQTGMHAHHNLSLGVANSIIAVEEGCDRIDASLAGMGAGAGNAPLEVFIAAAERLGWNHGTDLYTLMDAADDIVRPLQDRPVRVDRETLGLGYAGVYSSFLRHAEVAAAKYGLKTLDILVELGRRRMVGGQEDMIVDVALDLLAARKEQQA</sequence>
<protein>
    <recommendedName>
        <fullName evidence="1">4-hydroxy-2-oxovalerate aldolase</fullName>
        <shortName evidence="1">HOA</shortName>
        <ecNumber evidence="1">4.1.3.39</ecNumber>
    </recommendedName>
    <alternativeName>
        <fullName evidence="1">4-hydroxy-2-keto-pentanoic acid aldolase</fullName>
    </alternativeName>
    <alternativeName>
        <fullName evidence="1">4-hydroxy-2-oxopentanoate aldolase</fullName>
    </alternativeName>
</protein>